<keyword id="KW-0030">Aminoacyl-tRNA synthetase</keyword>
<keyword id="KW-0067">ATP-binding</keyword>
<keyword id="KW-0963">Cytoplasm</keyword>
<keyword id="KW-0436">Ligase</keyword>
<keyword id="KW-0547">Nucleotide-binding</keyword>
<keyword id="KW-0648">Protein biosynthesis</keyword>
<keyword id="KW-1185">Reference proteome</keyword>
<comment type="function">
    <text evidence="1">Catalyzes the attachment of L-aspartate to tRNA(Asp) in a two-step reaction: L-aspartate is first activated by ATP to form Asp-AMP and then transferred to the acceptor end of tRNA(Asp).</text>
</comment>
<comment type="catalytic activity">
    <reaction evidence="1">
        <text>tRNA(Asp) + L-aspartate + ATP = L-aspartyl-tRNA(Asp) + AMP + diphosphate</text>
        <dbReference type="Rhea" id="RHEA:19649"/>
        <dbReference type="Rhea" id="RHEA-COMP:9660"/>
        <dbReference type="Rhea" id="RHEA-COMP:9678"/>
        <dbReference type="ChEBI" id="CHEBI:29991"/>
        <dbReference type="ChEBI" id="CHEBI:30616"/>
        <dbReference type="ChEBI" id="CHEBI:33019"/>
        <dbReference type="ChEBI" id="CHEBI:78442"/>
        <dbReference type="ChEBI" id="CHEBI:78516"/>
        <dbReference type="ChEBI" id="CHEBI:456215"/>
        <dbReference type="EC" id="6.1.1.12"/>
    </reaction>
</comment>
<comment type="subunit">
    <text evidence="1">Homodimer.</text>
</comment>
<comment type="subcellular location">
    <subcellularLocation>
        <location evidence="1">Cytoplasm</location>
    </subcellularLocation>
</comment>
<comment type="similarity">
    <text evidence="1">Belongs to the class-II aminoacyl-tRNA synthetase family. Type 1 subfamily.</text>
</comment>
<accession>Q7VNF0</accession>
<organism>
    <name type="scientific">Haemophilus ducreyi (strain 35000HP / ATCC 700724)</name>
    <dbReference type="NCBI Taxonomy" id="233412"/>
    <lineage>
        <taxon>Bacteria</taxon>
        <taxon>Pseudomonadati</taxon>
        <taxon>Pseudomonadota</taxon>
        <taxon>Gammaproteobacteria</taxon>
        <taxon>Pasteurellales</taxon>
        <taxon>Pasteurellaceae</taxon>
        <taxon>Haemophilus</taxon>
    </lineage>
</organism>
<name>SYD_HAEDU</name>
<dbReference type="EC" id="6.1.1.12" evidence="1"/>
<dbReference type="EMBL" id="AE017143">
    <property type="protein sequence ID" value="AAP95529.1"/>
    <property type="molecule type" value="Genomic_DNA"/>
</dbReference>
<dbReference type="RefSeq" id="WP_010944582.1">
    <property type="nucleotide sequence ID" value="NC_002940.2"/>
</dbReference>
<dbReference type="SMR" id="Q7VNF0"/>
<dbReference type="STRING" id="233412.HD_0599"/>
<dbReference type="KEGG" id="hdu:HD_0599"/>
<dbReference type="eggNOG" id="COG0173">
    <property type="taxonomic scope" value="Bacteria"/>
</dbReference>
<dbReference type="HOGENOM" id="CLU_014330_3_2_6"/>
<dbReference type="OrthoDB" id="9802326at2"/>
<dbReference type="Proteomes" id="UP000001022">
    <property type="component" value="Chromosome"/>
</dbReference>
<dbReference type="GO" id="GO:0005737">
    <property type="term" value="C:cytoplasm"/>
    <property type="evidence" value="ECO:0007669"/>
    <property type="project" value="UniProtKB-SubCell"/>
</dbReference>
<dbReference type="GO" id="GO:0004815">
    <property type="term" value="F:aspartate-tRNA ligase activity"/>
    <property type="evidence" value="ECO:0007669"/>
    <property type="project" value="UniProtKB-UniRule"/>
</dbReference>
<dbReference type="GO" id="GO:0005524">
    <property type="term" value="F:ATP binding"/>
    <property type="evidence" value="ECO:0007669"/>
    <property type="project" value="UniProtKB-UniRule"/>
</dbReference>
<dbReference type="GO" id="GO:0003676">
    <property type="term" value="F:nucleic acid binding"/>
    <property type="evidence" value="ECO:0007669"/>
    <property type="project" value="InterPro"/>
</dbReference>
<dbReference type="GO" id="GO:0006422">
    <property type="term" value="P:aspartyl-tRNA aminoacylation"/>
    <property type="evidence" value="ECO:0007669"/>
    <property type="project" value="UniProtKB-UniRule"/>
</dbReference>
<dbReference type="CDD" id="cd00777">
    <property type="entry name" value="AspRS_core"/>
    <property type="match status" value="1"/>
</dbReference>
<dbReference type="CDD" id="cd04317">
    <property type="entry name" value="EcAspRS_like_N"/>
    <property type="match status" value="1"/>
</dbReference>
<dbReference type="Gene3D" id="3.30.930.10">
    <property type="entry name" value="Bira Bifunctional Protein, Domain 2"/>
    <property type="match status" value="1"/>
</dbReference>
<dbReference type="Gene3D" id="3.30.1360.30">
    <property type="entry name" value="GAD-like domain"/>
    <property type="match status" value="1"/>
</dbReference>
<dbReference type="Gene3D" id="2.40.50.140">
    <property type="entry name" value="Nucleic acid-binding proteins"/>
    <property type="match status" value="1"/>
</dbReference>
<dbReference type="HAMAP" id="MF_00044">
    <property type="entry name" value="Asp_tRNA_synth_type1"/>
    <property type="match status" value="1"/>
</dbReference>
<dbReference type="InterPro" id="IPR004364">
    <property type="entry name" value="Aa-tRNA-synt_II"/>
</dbReference>
<dbReference type="InterPro" id="IPR006195">
    <property type="entry name" value="aa-tRNA-synth_II"/>
</dbReference>
<dbReference type="InterPro" id="IPR045864">
    <property type="entry name" value="aa-tRNA-synth_II/BPL/LPL"/>
</dbReference>
<dbReference type="InterPro" id="IPR004524">
    <property type="entry name" value="Asp-tRNA-ligase_1"/>
</dbReference>
<dbReference type="InterPro" id="IPR047089">
    <property type="entry name" value="Asp-tRNA-ligase_1_N"/>
</dbReference>
<dbReference type="InterPro" id="IPR002312">
    <property type="entry name" value="Asp/Asn-tRNA-synth_IIb"/>
</dbReference>
<dbReference type="InterPro" id="IPR047090">
    <property type="entry name" value="AspRS_core"/>
</dbReference>
<dbReference type="InterPro" id="IPR004115">
    <property type="entry name" value="GAD-like_sf"/>
</dbReference>
<dbReference type="InterPro" id="IPR029351">
    <property type="entry name" value="GAD_dom"/>
</dbReference>
<dbReference type="InterPro" id="IPR012340">
    <property type="entry name" value="NA-bd_OB-fold"/>
</dbReference>
<dbReference type="InterPro" id="IPR004365">
    <property type="entry name" value="NA-bd_OB_tRNA"/>
</dbReference>
<dbReference type="NCBIfam" id="TIGR00459">
    <property type="entry name" value="aspS_bact"/>
    <property type="match status" value="1"/>
</dbReference>
<dbReference type="NCBIfam" id="NF001750">
    <property type="entry name" value="PRK00476.1"/>
    <property type="match status" value="1"/>
</dbReference>
<dbReference type="PANTHER" id="PTHR22594:SF5">
    <property type="entry name" value="ASPARTATE--TRNA LIGASE, MITOCHONDRIAL"/>
    <property type="match status" value="1"/>
</dbReference>
<dbReference type="PANTHER" id="PTHR22594">
    <property type="entry name" value="ASPARTYL/LYSYL-TRNA SYNTHETASE"/>
    <property type="match status" value="1"/>
</dbReference>
<dbReference type="Pfam" id="PF02938">
    <property type="entry name" value="GAD"/>
    <property type="match status" value="1"/>
</dbReference>
<dbReference type="Pfam" id="PF00152">
    <property type="entry name" value="tRNA-synt_2"/>
    <property type="match status" value="1"/>
</dbReference>
<dbReference type="Pfam" id="PF01336">
    <property type="entry name" value="tRNA_anti-codon"/>
    <property type="match status" value="1"/>
</dbReference>
<dbReference type="PRINTS" id="PR01042">
    <property type="entry name" value="TRNASYNTHASP"/>
</dbReference>
<dbReference type="SUPFAM" id="SSF55681">
    <property type="entry name" value="Class II aaRS and biotin synthetases"/>
    <property type="match status" value="1"/>
</dbReference>
<dbReference type="SUPFAM" id="SSF55261">
    <property type="entry name" value="GAD domain-like"/>
    <property type="match status" value="1"/>
</dbReference>
<dbReference type="SUPFAM" id="SSF50249">
    <property type="entry name" value="Nucleic acid-binding proteins"/>
    <property type="match status" value="1"/>
</dbReference>
<dbReference type="PROSITE" id="PS50862">
    <property type="entry name" value="AA_TRNA_LIGASE_II"/>
    <property type="match status" value="1"/>
</dbReference>
<reference key="1">
    <citation type="submission" date="2003-06" db="EMBL/GenBank/DDBJ databases">
        <title>The complete genome sequence of Haemophilus ducreyi.</title>
        <authorList>
            <person name="Munson R.S. Jr."/>
            <person name="Ray W.C."/>
            <person name="Mahairas G."/>
            <person name="Sabo P."/>
            <person name="Mungur R."/>
            <person name="Johnson L."/>
            <person name="Nguyen D."/>
            <person name="Wang J."/>
            <person name="Forst C."/>
            <person name="Hood L."/>
        </authorList>
    </citation>
    <scope>NUCLEOTIDE SEQUENCE [LARGE SCALE GENOMIC DNA]</scope>
    <source>
        <strain>35000HP / ATCC 700724</strain>
    </source>
</reference>
<feature type="chain" id="PRO_0000110879" description="Aspartate--tRNA ligase">
    <location>
        <begin position="1"/>
        <end position="589"/>
    </location>
</feature>
<feature type="region of interest" description="Aspartate" evidence="1">
    <location>
        <begin position="196"/>
        <end position="199"/>
    </location>
</feature>
<feature type="binding site" evidence="1">
    <location>
        <position position="172"/>
    </location>
    <ligand>
        <name>L-aspartate</name>
        <dbReference type="ChEBI" id="CHEBI:29991"/>
    </ligand>
</feature>
<feature type="binding site" evidence="1">
    <location>
        <begin position="218"/>
        <end position="220"/>
    </location>
    <ligand>
        <name>ATP</name>
        <dbReference type="ChEBI" id="CHEBI:30616"/>
    </ligand>
</feature>
<feature type="binding site" evidence="1">
    <location>
        <position position="218"/>
    </location>
    <ligand>
        <name>L-aspartate</name>
        <dbReference type="ChEBI" id="CHEBI:29991"/>
    </ligand>
</feature>
<feature type="binding site" evidence="1">
    <location>
        <position position="227"/>
    </location>
    <ligand>
        <name>ATP</name>
        <dbReference type="ChEBI" id="CHEBI:30616"/>
    </ligand>
</feature>
<feature type="binding site" evidence="1">
    <location>
        <position position="449"/>
    </location>
    <ligand>
        <name>L-aspartate</name>
        <dbReference type="ChEBI" id="CHEBI:29991"/>
    </ligand>
</feature>
<feature type="binding site" evidence="1">
    <location>
        <position position="483"/>
    </location>
    <ligand>
        <name>ATP</name>
        <dbReference type="ChEBI" id="CHEBI:30616"/>
    </ligand>
</feature>
<feature type="binding site" evidence="1">
    <location>
        <position position="490"/>
    </location>
    <ligand>
        <name>L-aspartate</name>
        <dbReference type="ChEBI" id="CHEBI:29991"/>
    </ligand>
</feature>
<feature type="binding site" evidence="1">
    <location>
        <begin position="535"/>
        <end position="538"/>
    </location>
    <ligand>
        <name>ATP</name>
        <dbReference type="ChEBI" id="CHEBI:30616"/>
    </ligand>
</feature>
<sequence>MMRSHYCGTLNRSHVGQAVTLSGWVHRIRNLGRFIFMQIRDREGIVQVFFDEKDDTLFKVASQLRAEACVQIQGQVIARDEAQINPEMATGEIEVLVQNVLVYNNAEVLPLDFNQNNTEEQRLKYRYLDLRRHKMAENLKTRAKITSFVRRYMDEHGFLDIETPMLTKATPEGARDYLVPSRVHKGKFYALPQSPQLFKQLLMMSGFDRYYQIVKCFRDEDLRADRQPEFTQIDVETSFLTAEEVRALMENMIHSLWLDRLNVDLGKFPIMSWQEAMQHFGSDKPDLRNPLELVDIADIVKNVEFNVFNEPANAIDGRVTVLRVPNGATLTRKQIDEYTQFVAIYGAKGLAWAKINDINAGMDGIQSPVAKFLNAEIFNALIERTAAQNGDILFFGADKWQVVTDAMGALRLKIGRDLALTDQTAWKPLWVIDFPMFERDGEGNLSAMHHPFTAPKDLSPDQLAADPIKAVANAYDMVINGYEVGGGSVRIFDPKMQQTVFNILGINEQDQQEKFGFLLDALKFGTPPHAGLAFGLDRLTMLITGTENIRDVIAFPKTTAAACLMTEAPSYANPQVLQELAIQTTVETE</sequence>
<evidence type="ECO:0000255" key="1">
    <source>
        <dbReference type="HAMAP-Rule" id="MF_00044"/>
    </source>
</evidence>
<proteinExistence type="inferred from homology"/>
<protein>
    <recommendedName>
        <fullName evidence="1">Aspartate--tRNA ligase</fullName>
        <ecNumber evidence="1">6.1.1.12</ecNumber>
    </recommendedName>
    <alternativeName>
        <fullName evidence="1">Aspartyl-tRNA synthetase</fullName>
        <shortName evidence="1">AspRS</shortName>
    </alternativeName>
</protein>
<gene>
    <name evidence="1" type="primary">aspS</name>
    <name type="ordered locus">HD_0599</name>
</gene>